<accession>Q83MX3</accession>
<gene>
    <name evidence="1" type="primary">ispDF</name>
    <name type="ordered locus">TWT_348</name>
</gene>
<protein>
    <recommendedName>
        <fullName evidence="1">Bifunctional enzyme IspD/IspF</fullName>
    </recommendedName>
    <domain>
        <recommendedName>
            <fullName evidence="1">2-C-methyl-D-erythritol 4-phosphate cytidylyltransferase</fullName>
            <ecNumber evidence="1">2.7.7.60</ecNumber>
        </recommendedName>
        <alternativeName>
            <fullName evidence="1">4-diphosphocytidyl-2C-methyl-D-erythritol synthase</fullName>
        </alternativeName>
        <alternativeName>
            <fullName evidence="1">MEP cytidylyltransferase</fullName>
            <shortName evidence="1">MCT</shortName>
        </alternativeName>
    </domain>
    <domain>
        <recommendedName>
            <fullName evidence="1">2-C-methyl-D-erythritol 2,4-cyclodiphosphate synthase</fullName>
            <shortName evidence="1">MECDP-synthase</shortName>
            <shortName evidence="1">MECPP-synthase</shortName>
            <shortName evidence="1">MECPS</shortName>
            <ecNumber evidence="1">4.6.1.12</ecNumber>
        </recommendedName>
    </domain>
</protein>
<evidence type="ECO:0000255" key="1">
    <source>
        <dbReference type="HAMAP-Rule" id="MF_01520"/>
    </source>
</evidence>
<keyword id="KW-0414">Isoprene biosynthesis</keyword>
<keyword id="KW-0456">Lyase</keyword>
<keyword id="KW-0479">Metal-binding</keyword>
<keyword id="KW-0511">Multifunctional enzyme</keyword>
<keyword id="KW-0548">Nucleotidyltransferase</keyword>
<keyword id="KW-1185">Reference proteome</keyword>
<keyword id="KW-0808">Transferase</keyword>
<sequence length="422" mass="45323">MAVGLLLLAAGVGSRLSSSLPKAFVSVGGLDLIQWCLKNLGQLRTALEVVVTVPKGFVELCERNVLQSLGTLEKIKIVTGGATRQDSVGLGIRYFSARITKLLVHDVARAFTPPEIYLSVIKQLETSKAVIPVIAIVDSIKKVNMQDAYREVARGPGEPFHTKSVLHLDRREFFSAQTPQGFDRALLEAAHERSVASNEQFADDSVMVAQIEKDITLINGHEASFKVTNPCDLQRAEFAASSLLSKSNVSPVNISQPPISALSMPLPLIGVGIDFHKFILDESPLFLACLEWKNYRRLQGHSDGDVVAHACTTALLSAANMGDIGSVFGVDLAATKDASGAYFLESTNRLLATNGFCVLNIAVQVISNTPRLADRRVEAEHAISDCLSGARISLSSVTTDGMGFLGRGEGIGAIAVAQIYHR</sequence>
<organism>
    <name type="scientific">Tropheryma whipplei (strain Twist)</name>
    <name type="common">Whipple's bacillus</name>
    <dbReference type="NCBI Taxonomy" id="203267"/>
    <lineage>
        <taxon>Bacteria</taxon>
        <taxon>Bacillati</taxon>
        <taxon>Actinomycetota</taxon>
        <taxon>Actinomycetes</taxon>
        <taxon>Micrococcales</taxon>
        <taxon>Tropherymataceae</taxon>
        <taxon>Tropheryma</taxon>
    </lineage>
</organism>
<comment type="function">
    <text evidence="1">Bifunctional enzyme that catalyzes the formation of 4-diphosphocytidyl-2-C-methyl-D-erythritol from CTP and 2-C-methyl-D-erythritol 4-phosphate (MEP) (IspD), and catalyzes the conversion of 4-diphosphocytidyl-2-C-methyl-D-erythritol 2-phosphate (CDP-ME2P) to 2-C-methyl-D-erythritol 2,4-cyclodiphosphate (ME-CPP) with a corresponding release of cytidine 5-monophosphate (CMP) (IspF).</text>
</comment>
<comment type="catalytic activity">
    <reaction evidence="1">
        <text>2-C-methyl-D-erythritol 4-phosphate + CTP + H(+) = 4-CDP-2-C-methyl-D-erythritol + diphosphate</text>
        <dbReference type="Rhea" id="RHEA:13429"/>
        <dbReference type="ChEBI" id="CHEBI:15378"/>
        <dbReference type="ChEBI" id="CHEBI:33019"/>
        <dbReference type="ChEBI" id="CHEBI:37563"/>
        <dbReference type="ChEBI" id="CHEBI:57823"/>
        <dbReference type="ChEBI" id="CHEBI:58262"/>
        <dbReference type="EC" id="2.7.7.60"/>
    </reaction>
</comment>
<comment type="catalytic activity">
    <reaction evidence="1">
        <text>4-CDP-2-C-methyl-D-erythritol 2-phosphate = 2-C-methyl-D-erythritol 2,4-cyclic diphosphate + CMP</text>
        <dbReference type="Rhea" id="RHEA:23864"/>
        <dbReference type="ChEBI" id="CHEBI:57919"/>
        <dbReference type="ChEBI" id="CHEBI:58483"/>
        <dbReference type="ChEBI" id="CHEBI:60377"/>
        <dbReference type="EC" id="4.6.1.12"/>
    </reaction>
</comment>
<comment type="cofactor">
    <cofactor evidence="1">
        <name>a divalent metal cation</name>
        <dbReference type="ChEBI" id="CHEBI:60240"/>
    </cofactor>
</comment>
<comment type="pathway">
    <text evidence="1">Isoprenoid biosynthesis; isopentenyl diphosphate biosynthesis via DXP pathway; isopentenyl diphosphate from 1-deoxy-D-xylulose 5-phosphate: step 2/6.</text>
</comment>
<comment type="pathway">
    <text evidence="1">Isoprenoid biosynthesis; isopentenyl diphosphate biosynthesis via DXP pathway; isopentenyl diphosphate from 1-deoxy-D-xylulose 5-phosphate: step 4/6.</text>
</comment>
<comment type="similarity">
    <text evidence="1">In the N-terminal section; belongs to the IspD/TarI cytidylyltransferase family. IspD subfamily.</text>
</comment>
<comment type="similarity">
    <text evidence="1">In the C-terminal section; belongs to the IspF family.</text>
</comment>
<dbReference type="EC" id="2.7.7.60" evidence="1"/>
<dbReference type="EC" id="4.6.1.12" evidence="1"/>
<dbReference type="EMBL" id="AE014184">
    <property type="protein sequence ID" value="AAO44445.1"/>
    <property type="molecule type" value="Genomic_DNA"/>
</dbReference>
<dbReference type="RefSeq" id="WP_011096372.1">
    <property type="nucleotide sequence ID" value="NC_004572.3"/>
</dbReference>
<dbReference type="SMR" id="Q83MX3"/>
<dbReference type="STRING" id="203267.TWT_348"/>
<dbReference type="KEGG" id="twh:TWT_348"/>
<dbReference type="eggNOG" id="COG0245">
    <property type="taxonomic scope" value="Bacteria"/>
</dbReference>
<dbReference type="eggNOG" id="COG1211">
    <property type="taxonomic scope" value="Bacteria"/>
</dbReference>
<dbReference type="HOGENOM" id="CLU_042800_2_5_11"/>
<dbReference type="OrthoDB" id="9802561at2"/>
<dbReference type="UniPathway" id="UPA00056">
    <property type="reaction ID" value="UER00093"/>
</dbReference>
<dbReference type="UniPathway" id="UPA00056">
    <property type="reaction ID" value="UER00095"/>
</dbReference>
<dbReference type="Proteomes" id="UP000002200">
    <property type="component" value="Chromosome"/>
</dbReference>
<dbReference type="GO" id="GO:0008685">
    <property type="term" value="F:2-C-methyl-D-erythritol 2,4-cyclodiphosphate synthase activity"/>
    <property type="evidence" value="ECO:0007669"/>
    <property type="project" value="UniProtKB-UniRule"/>
</dbReference>
<dbReference type="GO" id="GO:0050518">
    <property type="term" value="F:2-C-methyl-D-erythritol 4-phosphate cytidylyltransferase activity"/>
    <property type="evidence" value="ECO:0007669"/>
    <property type="project" value="UniProtKB-UniRule"/>
</dbReference>
<dbReference type="GO" id="GO:0046872">
    <property type="term" value="F:metal ion binding"/>
    <property type="evidence" value="ECO:0007669"/>
    <property type="project" value="UniProtKB-KW"/>
</dbReference>
<dbReference type="GO" id="GO:0019288">
    <property type="term" value="P:isopentenyl diphosphate biosynthetic process, methylerythritol 4-phosphate pathway"/>
    <property type="evidence" value="ECO:0007669"/>
    <property type="project" value="UniProtKB-UniRule"/>
</dbReference>
<dbReference type="GO" id="GO:0016114">
    <property type="term" value="P:terpenoid biosynthetic process"/>
    <property type="evidence" value="ECO:0007669"/>
    <property type="project" value="InterPro"/>
</dbReference>
<dbReference type="CDD" id="cd02516">
    <property type="entry name" value="CDP-ME_synthetase"/>
    <property type="match status" value="1"/>
</dbReference>
<dbReference type="CDD" id="cd00554">
    <property type="entry name" value="MECDP_synthase"/>
    <property type="match status" value="1"/>
</dbReference>
<dbReference type="Gene3D" id="3.30.1330.50">
    <property type="entry name" value="2-C-methyl-D-erythritol 2,4-cyclodiphosphate synthase"/>
    <property type="match status" value="1"/>
</dbReference>
<dbReference type="Gene3D" id="3.90.550.10">
    <property type="entry name" value="Spore Coat Polysaccharide Biosynthesis Protein SpsA, Chain A"/>
    <property type="match status" value="1"/>
</dbReference>
<dbReference type="HAMAP" id="MF_01520">
    <property type="entry name" value="IspDF"/>
    <property type="match status" value="1"/>
</dbReference>
<dbReference type="HAMAP" id="MF_00107">
    <property type="entry name" value="IspF"/>
    <property type="match status" value="1"/>
</dbReference>
<dbReference type="InterPro" id="IPR026596">
    <property type="entry name" value="IspD/F"/>
</dbReference>
<dbReference type="InterPro" id="IPR034683">
    <property type="entry name" value="IspD/TarI"/>
</dbReference>
<dbReference type="InterPro" id="IPR050088">
    <property type="entry name" value="IspD/TarI_cytidylyltransf_bact"/>
</dbReference>
<dbReference type="InterPro" id="IPR003526">
    <property type="entry name" value="MECDP_synthase"/>
</dbReference>
<dbReference type="InterPro" id="IPR020555">
    <property type="entry name" value="MECDP_synthase_CS"/>
</dbReference>
<dbReference type="InterPro" id="IPR036571">
    <property type="entry name" value="MECDP_synthase_sf"/>
</dbReference>
<dbReference type="InterPro" id="IPR029044">
    <property type="entry name" value="Nucleotide-diphossugar_trans"/>
</dbReference>
<dbReference type="PANTHER" id="PTHR32125">
    <property type="entry name" value="2-C-METHYL-D-ERYTHRITOL 4-PHOSPHATE CYTIDYLYLTRANSFERASE, CHLOROPLASTIC"/>
    <property type="match status" value="1"/>
</dbReference>
<dbReference type="PANTHER" id="PTHR32125:SF4">
    <property type="entry name" value="2-C-METHYL-D-ERYTHRITOL 4-PHOSPHATE CYTIDYLYLTRANSFERASE, CHLOROPLASTIC"/>
    <property type="match status" value="1"/>
</dbReference>
<dbReference type="Pfam" id="PF01128">
    <property type="entry name" value="IspD"/>
    <property type="match status" value="1"/>
</dbReference>
<dbReference type="Pfam" id="PF02542">
    <property type="entry name" value="YgbB"/>
    <property type="match status" value="1"/>
</dbReference>
<dbReference type="SUPFAM" id="SSF69765">
    <property type="entry name" value="IpsF-like"/>
    <property type="match status" value="1"/>
</dbReference>
<dbReference type="SUPFAM" id="SSF53448">
    <property type="entry name" value="Nucleotide-diphospho-sugar transferases"/>
    <property type="match status" value="1"/>
</dbReference>
<dbReference type="PROSITE" id="PS01350">
    <property type="entry name" value="ISPF"/>
    <property type="match status" value="1"/>
</dbReference>
<feature type="chain" id="PRO_0000075680" description="Bifunctional enzyme IspD/IspF">
    <location>
        <begin position="1"/>
        <end position="422"/>
    </location>
</feature>
<feature type="region of interest" description="2-C-methyl-D-erythritol 4-phosphate cytidylyltransferase" evidence="1">
    <location>
        <begin position="1"/>
        <end position="267"/>
    </location>
</feature>
<feature type="region of interest" description="2-C-methyl-D-erythritol 2,4-cyclodiphosphate synthase" evidence="1">
    <location>
        <begin position="268"/>
        <end position="422"/>
    </location>
</feature>
<feature type="binding site" evidence="1">
    <location>
        <begin position="274"/>
        <end position="276"/>
    </location>
    <ligand>
        <name>4-CDP-2-C-methyl-D-erythritol 2-phosphate</name>
        <dbReference type="ChEBI" id="CHEBI:57919"/>
    </ligand>
</feature>
<feature type="binding site" evidence="1">
    <location>
        <position position="274"/>
    </location>
    <ligand>
        <name>a divalent metal cation</name>
        <dbReference type="ChEBI" id="CHEBI:60240"/>
    </ligand>
</feature>
<feature type="binding site" evidence="1">
    <location>
        <position position="276"/>
    </location>
    <ligand>
        <name>a divalent metal cation</name>
        <dbReference type="ChEBI" id="CHEBI:60240"/>
    </ligand>
</feature>
<feature type="binding site" evidence="1">
    <location>
        <begin position="301"/>
        <end position="302"/>
    </location>
    <ligand>
        <name>4-CDP-2-C-methyl-D-erythritol 2-phosphate</name>
        <dbReference type="ChEBI" id="CHEBI:57919"/>
    </ligand>
</feature>
<feature type="binding site" evidence="1">
    <location>
        <position position="309"/>
    </location>
    <ligand>
        <name>a divalent metal cation</name>
        <dbReference type="ChEBI" id="CHEBI:60240"/>
    </ligand>
</feature>
<feature type="binding site" evidence="1">
    <location>
        <begin position="323"/>
        <end position="325"/>
    </location>
    <ligand>
        <name>4-CDP-2-C-methyl-D-erythritol 2-phosphate</name>
        <dbReference type="ChEBI" id="CHEBI:57919"/>
    </ligand>
</feature>
<feature type="binding site" evidence="1">
    <location>
        <position position="404"/>
    </location>
    <ligand>
        <name>4-CDP-2-C-methyl-D-erythritol 2-phosphate</name>
        <dbReference type="ChEBI" id="CHEBI:57919"/>
    </ligand>
</feature>
<feature type="binding site" evidence="1">
    <location>
        <position position="407"/>
    </location>
    <ligand>
        <name>4-CDP-2-C-methyl-D-erythritol 2-phosphate</name>
        <dbReference type="ChEBI" id="CHEBI:57919"/>
    </ligand>
</feature>
<feature type="site" description="Transition state stabilizer" evidence="1">
    <location>
        <position position="15"/>
    </location>
</feature>
<feature type="site" description="Transition state stabilizer" evidence="1">
    <location>
        <position position="22"/>
    </location>
</feature>
<feature type="site" description="Positions MEP for the nucleophilic attack" evidence="1">
    <location>
        <position position="170"/>
    </location>
</feature>
<feature type="site" description="Positions MEP for the nucleophilic attack" evidence="1">
    <location>
        <position position="226"/>
    </location>
</feature>
<feature type="site" description="Transition state stabilizer" evidence="1">
    <location>
        <position position="301"/>
    </location>
</feature>
<feature type="site" description="Transition state stabilizer" evidence="1">
    <location>
        <position position="398"/>
    </location>
</feature>
<name>ISPDF_TROWT</name>
<proteinExistence type="inferred from homology"/>
<reference key="1">
    <citation type="journal article" date="2003" name="Genome Res.">
        <title>Tropheryma whipplei twist: a human pathogenic Actinobacteria with a reduced genome.</title>
        <authorList>
            <person name="Raoult D."/>
            <person name="Ogata H."/>
            <person name="Audic S."/>
            <person name="Robert C."/>
            <person name="Suhre K."/>
            <person name="Drancourt M."/>
            <person name="Claverie J.-M."/>
        </authorList>
    </citation>
    <scope>NUCLEOTIDE SEQUENCE [LARGE SCALE GENOMIC DNA]</scope>
    <source>
        <strain>Twist</strain>
    </source>
</reference>